<sequence length="326" mass="34504">MSLRLGQIVDALGGSLEGGERDTEILRIAPLESSGPGDLSFLSNPRYQSQLAASQAACVIVAPAMRNAALERGACIVVEQPYTYFAHVTQLWVRAHGQGAPAGIHPSAVVDPQARVAPTASIGPLCVVERGAVIGAHTVLKSRVTVGERCTVGERCILHPGVVIGADGFGFAQQRGEWIKIEQLGAVRIGNDVEIGANTCIDRGALDDTVIEDGVKLDNLIQIAHNVHIGRHTAMAGCSAVAGSTRIGAHCTIAGAASIVGHLQLADNVHISTNTVVTHSITQPGQYTGVFPMDDNAKWEKNAATLRQLYRLRERIKALEQTRKDG</sequence>
<organism>
    <name type="scientific">Acidovorax sp. (strain JS42)</name>
    <dbReference type="NCBI Taxonomy" id="232721"/>
    <lineage>
        <taxon>Bacteria</taxon>
        <taxon>Pseudomonadati</taxon>
        <taxon>Pseudomonadota</taxon>
        <taxon>Betaproteobacteria</taxon>
        <taxon>Burkholderiales</taxon>
        <taxon>Comamonadaceae</taxon>
        <taxon>Acidovorax</taxon>
    </lineage>
</organism>
<accession>A1W908</accession>
<reference key="1">
    <citation type="submission" date="2006-12" db="EMBL/GenBank/DDBJ databases">
        <title>Complete sequence of chromosome 1 of Acidovorax sp. JS42.</title>
        <authorList>
            <person name="Copeland A."/>
            <person name="Lucas S."/>
            <person name="Lapidus A."/>
            <person name="Barry K."/>
            <person name="Detter J.C."/>
            <person name="Glavina del Rio T."/>
            <person name="Dalin E."/>
            <person name="Tice H."/>
            <person name="Pitluck S."/>
            <person name="Chertkov O."/>
            <person name="Brettin T."/>
            <person name="Bruce D."/>
            <person name="Han C."/>
            <person name="Tapia R."/>
            <person name="Gilna P."/>
            <person name="Schmutz J."/>
            <person name="Larimer F."/>
            <person name="Land M."/>
            <person name="Hauser L."/>
            <person name="Kyrpides N."/>
            <person name="Kim E."/>
            <person name="Stahl D."/>
            <person name="Richardson P."/>
        </authorList>
    </citation>
    <scope>NUCLEOTIDE SEQUENCE [LARGE SCALE GENOMIC DNA]</scope>
    <source>
        <strain>JS42</strain>
    </source>
</reference>
<feature type="chain" id="PRO_1000050921" description="UDP-3-O-acylglucosamine N-acyltransferase">
    <location>
        <begin position="1"/>
        <end position="326"/>
    </location>
</feature>
<feature type="active site" description="Proton acceptor" evidence="1">
    <location>
        <position position="225"/>
    </location>
</feature>
<proteinExistence type="inferred from homology"/>
<evidence type="ECO:0000255" key="1">
    <source>
        <dbReference type="HAMAP-Rule" id="MF_00523"/>
    </source>
</evidence>
<name>LPXD_ACISJ</name>
<dbReference type="EC" id="2.3.1.191" evidence="1"/>
<dbReference type="EMBL" id="CP000539">
    <property type="protein sequence ID" value="ABM42733.1"/>
    <property type="molecule type" value="Genomic_DNA"/>
</dbReference>
<dbReference type="SMR" id="A1W908"/>
<dbReference type="STRING" id="232721.Ajs_2575"/>
<dbReference type="KEGG" id="ajs:Ajs_2575"/>
<dbReference type="eggNOG" id="COG1044">
    <property type="taxonomic scope" value="Bacteria"/>
</dbReference>
<dbReference type="HOGENOM" id="CLU_049865_0_0_4"/>
<dbReference type="UniPathway" id="UPA00973"/>
<dbReference type="Proteomes" id="UP000000645">
    <property type="component" value="Chromosome"/>
</dbReference>
<dbReference type="GO" id="GO:0016020">
    <property type="term" value="C:membrane"/>
    <property type="evidence" value="ECO:0007669"/>
    <property type="project" value="GOC"/>
</dbReference>
<dbReference type="GO" id="GO:0016410">
    <property type="term" value="F:N-acyltransferase activity"/>
    <property type="evidence" value="ECO:0007669"/>
    <property type="project" value="InterPro"/>
</dbReference>
<dbReference type="GO" id="GO:0009245">
    <property type="term" value="P:lipid A biosynthetic process"/>
    <property type="evidence" value="ECO:0007669"/>
    <property type="project" value="UniProtKB-UniRule"/>
</dbReference>
<dbReference type="CDD" id="cd03352">
    <property type="entry name" value="LbH_LpxD"/>
    <property type="match status" value="1"/>
</dbReference>
<dbReference type="Gene3D" id="2.160.10.10">
    <property type="entry name" value="Hexapeptide repeat proteins"/>
    <property type="match status" value="1"/>
</dbReference>
<dbReference type="Gene3D" id="3.40.1390.10">
    <property type="entry name" value="MurE/MurF, N-terminal domain"/>
    <property type="match status" value="1"/>
</dbReference>
<dbReference type="HAMAP" id="MF_00523">
    <property type="entry name" value="LpxD"/>
    <property type="match status" value="1"/>
</dbReference>
<dbReference type="InterPro" id="IPR001451">
    <property type="entry name" value="Hexapep"/>
</dbReference>
<dbReference type="InterPro" id="IPR018357">
    <property type="entry name" value="Hexapep_transf_CS"/>
</dbReference>
<dbReference type="InterPro" id="IPR007691">
    <property type="entry name" value="LpxD"/>
</dbReference>
<dbReference type="InterPro" id="IPR011004">
    <property type="entry name" value="Trimer_LpxA-like_sf"/>
</dbReference>
<dbReference type="InterPro" id="IPR020573">
    <property type="entry name" value="UDP_GlcNAc_AcTrfase_non-rep"/>
</dbReference>
<dbReference type="NCBIfam" id="TIGR01853">
    <property type="entry name" value="lipid_A_lpxD"/>
    <property type="match status" value="1"/>
</dbReference>
<dbReference type="NCBIfam" id="NF002060">
    <property type="entry name" value="PRK00892.1"/>
    <property type="match status" value="1"/>
</dbReference>
<dbReference type="PANTHER" id="PTHR43378">
    <property type="entry name" value="UDP-3-O-ACYLGLUCOSAMINE N-ACYLTRANSFERASE"/>
    <property type="match status" value="1"/>
</dbReference>
<dbReference type="PANTHER" id="PTHR43378:SF2">
    <property type="entry name" value="UDP-3-O-ACYLGLUCOSAMINE N-ACYLTRANSFERASE 1, MITOCHONDRIAL-RELATED"/>
    <property type="match status" value="1"/>
</dbReference>
<dbReference type="Pfam" id="PF00132">
    <property type="entry name" value="Hexapep"/>
    <property type="match status" value="1"/>
</dbReference>
<dbReference type="Pfam" id="PF04613">
    <property type="entry name" value="LpxD"/>
    <property type="match status" value="1"/>
</dbReference>
<dbReference type="SUPFAM" id="SSF51161">
    <property type="entry name" value="Trimeric LpxA-like enzymes"/>
    <property type="match status" value="1"/>
</dbReference>
<dbReference type="PROSITE" id="PS00101">
    <property type="entry name" value="HEXAPEP_TRANSFERASES"/>
    <property type="match status" value="1"/>
</dbReference>
<protein>
    <recommendedName>
        <fullName evidence="1">UDP-3-O-acylglucosamine N-acyltransferase</fullName>
        <ecNumber evidence="1">2.3.1.191</ecNumber>
    </recommendedName>
</protein>
<comment type="function">
    <text evidence="1">Catalyzes the N-acylation of UDP-3-O-acylglucosamine using 3-hydroxyacyl-ACP as the acyl donor. Is involved in the biosynthesis of lipid A, a phosphorylated glycolipid that anchors the lipopolysaccharide to the outer membrane of the cell.</text>
</comment>
<comment type="catalytic activity">
    <reaction evidence="1">
        <text>a UDP-3-O-[(3R)-3-hydroxyacyl]-alpha-D-glucosamine + a (3R)-hydroxyacyl-[ACP] = a UDP-2-N,3-O-bis[(3R)-3-hydroxyacyl]-alpha-D-glucosamine + holo-[ACP] + H(+)</text>
        <dbReference type="Rhea" id="RHEA:53836"/>
        <dbReference type="Rhea" id="RHEA-COMP:9685"/>
        <dbReference type="Rhea" id="RHEA-COMP:9945"/>
        <dbReference type="ChEBI" id="CHEBI:15378"/>
        <dbReference type="ChEBI" id="CHEBI:64479"/>
        <dbReference type="ChEBI" id="CHEBI:78827"/>
        <dbReference type="ChEBI" id="CHEBI:137740"/>
        <dbReference type="ChEBI" id="CHEBI:137748"/>
        <dbReference type="EC" id="2.3.1.191"/>
    </reaction>
</comment>
<comment type="pathway">
    <text evidence="1">Bacterial outer membrane biogenesis; LPS lipid A biosynthesis.</text>
</comment>
<comment type="subunit">
    <text evidence="1">Homotrimer.</text>
</comment>
<comment type="similarity">
    <text evidence="1">Belongs to the transferase hexapeptide repeat family. LpxD subfamily.</text>
</comment>
<keyword id="KW-0012">Acyltransferase</keyword>
<keyword id="KW-0441">Lipid A biosynthesis</keyword>
<keyword id="KW-0444">Lipid biosynthesis</keyword>
<keyword id="KW-0443">Lipid metabolism</keyword>
<keyword id="KW-0677">Repeat</keyword>
<keyword id="KW-0808">Transferase</keyword>
<gene>
    <name evidence="1" type="primary">lpxD</name>
    <name type="ordered locus">Ajs_2575</name>
</gene>